<keyword id="KW-0158">Chromosome</keyword>
<keyword id="KW-0217">Developmental protein</keyword>
<keyword id="KW-0221">Differentiation</keyword>
<keyword id="KW-0238">DNA-binding</keyword>
<keyword id="KW-0479">Metal-binding</keyword>
<keyword id="KW-0544">Nucleosome core</keyword>
<keyword id="KW-0539">Nucleus</keyword>
<keyword id="KW-0597">Phosphoprotein</keyword>
<keyword id="KW-1185">Reference proteome</keyword>
<keyword id="KW-0744">Spermatogenesis</keyword>
<keyword id="KW-0862">Zinc</keyword>
<comment type="function">
    <text evidence="2">Plays a key role in the replacement of histones to protamine in the elongating spermatids of mammals. In condensing spermatids, loaded onto the nucleosomes, where it promotes the recruitment and processing of protamines, which are responsible for histone eviction.</text>
</comment>
<comment type="subcellular location">
    <subcellularLocation>
        <location evidence="1">Nucleus</location>
    </subcellularLocation>
    <subcellularLocation>
        <location evidence="1">Nucleus</location>
        <location evidence="1">Nucleolus</location>
    </subcellularLocation>
    <subcellularLocation>
        <location evidence="1">Chromosome</location>
    </subcellularLocation>
    <text evidence="1 2">Loaded onto the nucleosomes of condensing spermatids (By similarity). Nuclear import is mediated by IPO4. Nucleolar localization requires the protein to be phosphorylated (By similarity).</text>
</comment>
<comment type="tissue specificity">
    <text evidence="4">Testis.</text>
</comment>
<comment type="developmental stage">
    <text evidence="4">Haploid stage of the germ cells.</text>
</comment>
<comment type="similarity">
    <text evidence="5">Belongs to the nuclear transition protein 2 family.</text>
</comment>
<dbReference type="EMBL" id="X56400">
    <property type="protein sequence ID" value="CAA39810.1"/>
    <property type="molecule type" value="Genomic_DNA"/>
</dbReference>
<dbReference type="EMBL" id="X56401">
    <property type="protein sequence ID" value="CAA39811.1"/>
    <property type="molecule type" value="Genomic_DNA"/>
</dbReference>
<dbReference type="EMBL" id="BC109800">
    <property type="protein sequence ID" value="AAI09801.1"/>
    <property type="molecule type" value="mRNA"/>
</dbReference>
<dbReference type="PIR" id="S16134">
    <property type="entry name" value="BGBO2"/>
</dbReference>
<dbReference type="RefSeq" id="NP_776625.2">
    <property type="nucleotide sequence ID" value="NM_174200.2"/>
</dbReference>
<dbReference type="SMR" id="P26377"/>
<dbReference type="FunCoup" id="P26377">
    <property type="interactions" value="2"/>
</dbReference>
<dbReference type="STRING" id="9913.ENSBTAP00000048966"/>
<dbReference type="PaxDb" id="9913-ENSBTAP00000048966"/>
<dbReference type="Ensembl" id="ENSBTAT00000054025.3">
    <property type="protein sequence ID" value="ENSBTAP00000048966.1"/>
    <property type="gene ID" value="ENSBTAG00000032884.4"/>
</dbReference>
<dbReference type="GeneID" id="281538"/>
<dbReference type="KEGG" id="bta:281538"/>
<dbReference type="CTD" id="7142"/>
<dbReference type="VEuPathDB" id="HostDB:ENSBTAG00000032884"/>
<dbReference type="VGNC" id="VGNC:36198">
    <property type="gene designation" value="TNP2"/>
</dbReference>
<dbReference type="eggNOG" id="KOG4566">
    <property type="taxonomic scope" value="Eukaryota"/>
</dbReference>
<dbReference type="GeneTree" id="ENSGT00390000008176"/>
<dbReference type="HOGENOM" id="CLU_152028_0_0_1"/>
<dbReference type="InParanoid" id="P26377"/>
<dbReference type="OMA" id="SCSHHCQ"/>
<dbReference type="OrthoDB" id="9809326at2759"/>
<dbReference type="TreeFam" id="TF338516"/>
<dbReference type="Proteomes" id="UP000009136">
    <property type="component" value="Chromosome 25"/>
</dbReference>
<dbReference type="Bgee" id="ENSBTAG00000032884">
    <property type="expression patterns" value="Expressed in semen and 25 other cell types or tissues"/>
</dbReference>
<dbReference type="GO" id="GO:0005730">
    <property type="term" value="C:nucleolus"/>
    <property type="evidence" value="ECO:0007669"/>
    <property type="project" value="UniProtKB-SubCell"/>
</dbReference>
<dbReference type="GO" id="GO:0000786">
    <property type="term" value="C:nucleosome"/>
    <property type="evidence" value="ECO:0000250"/>
    <property type="project" value="UniProtKB"/>
</dbReference>
<dbReference type="GO" id="GO:0003677">
    <property type="term" value="F:DNA binding"/>
    <property type="evidence" value="ECO:0007669"/>
    <property type="project" value="UniProtKB-KW"/>
</dbReference>
<dbReference type="GO" id="GO:0008270">
    <property type="term" value="F:zinc ion binding"/>
    <property type="evidence" value="ECO:0000318"/>
    <property type="project" value="GO_Central"/>
</dbReference>
<dbReference type="GO" id="GO:0007340">
    <property type="term" value="P:acrosome reaction"/>
    <property type="evidence" value="ECO:0000318"/>
    <property type="project" value="GO_Central"/>
</dbReference>
<dbReference type="GO" id="GO:0007341">
    <property type="term" value="P:penetration of zona pellucida"/>
    <property type="evidence" value="ECO:0000318"/>
    <property type="project" value="GO_Central"/>
</dbReference>
<dbReference type="GO" id="GO:0010954">
    <property type="term" value="P:positive regulation of protein processing"/>
    <property type="evidence" value="ECO:0000250"/>
    <property type="project" value="UniProtKB"/>
</dbReference>
<dbReference type="GO" id="GO:0035092">
    <property type="term" value="P:sperm DNA condensation"/>
    <property type="evidence" value="ECO:0000250"/>
    <property type="project" value="UniProtKB"/>
</dbReference>
<dbReference type="GO" id="GO:0007283">
    <property type="term" value="P:spermatogenesis"/>
    <property type="evidence" value="ECO:0000318"/>
    <property type="project" value="GO_Central"/>
</dbReference>
<dbReference type="InterPro" id="IPR000678">
    <property type="entry name" value="TP2"/>
</dbReference>
<dbReference type="PANTHER" id="PTHR17488">
    <property type="entry name" value="NUCLEAR TRANSITION PROTEIN 2"/>
    <property type="match status" value="1"/>
</dbReference>
<dbReference type="PANTHER" id="PTHR17488:SF0">
    <property type="entry name" value="NUCLEAR TRANSITION PROTEIN 2"/>
    <property type="match status" value="1"/>
</dbReference>
<dbReference type="Pfam" id="PF01254">
    <property type="entry name" value="TP2"/>
    <property type="match status" value="1"/>
</dbReference>
<dbReference type="PROSITE" id="PS00970">
    <property type="entry name" value="TP2_1"/>
    <property type="match status" value="1"/>
</dbReference>
<dbReference type="PROSITE" id="PS00971">
    <property type="entry name" value="TP2_2"/>
    <property type="match status" value="1"/>
</dbReference>
<feature type="chain" id="PRO_0000191422" description="Nuclear transition protein 2">
    <location>
        <begin position="1"/>
        <end position="132"/>
    </location>
</feature>
<feature type="region of interest" description="Disordered" evidence="3">
    <location>
        <begin position="1"/>
        <end position="132"/>
    </location>
</feature>
<feature type="short sequence motif" description="Nuclear localization signal" evidence="1">
    <location>
        <begin position="105"/>
        <end position="113"/>
    </location>
</feature>
<feature type="compositionally biased region" description="Polar residues" evidence="3">
    <location>
        <begin position="1"/>
        <end position="20"/>
    </location>
</feature>
<feature type="compositionally biased region" description="Basic residues" evidence="3">
    <location>
        <begin position="37"/>
        <end position="59"/>
    </location>
</feature>
<feature type="compositionally biased region" description="Polar residues" evidence="3">
    <location>
        <begin position="82"/>
        <end position="94"/>
    </location>
</feature>
<feature type="compositionally biased region" description="Basic residues" evidence="3">
    <location>
        <begin position="108"/>
        <end position="132"/>
    </location>
</feature>
<feature type="binding site" evidence="1">
    <location>
        <position position="12"/>
    </location>
    <ligand>
        <name>Zn(2+)</name>
        <dbReference type="ChEBI" id="CHEBI:29105"/>
    </ligand>
</feature>
<feature type="binding site" evidence="1">
    <location>
        <position position="16"/>
    </location>
    <ligand>
        <name>Zn(2+)</name>
        <dbReference type="ChEBI" id="CHEBI:29105"/>
    </ligand>
</feature>
<feature type="binding site" evidence="1">
    <location>
        <position position="24"/>
    </location>
    <ligand>
        <name>Zn(2+)</name>
        <dbReference type="ChEBI" id="CHEBI:29105"/>
    </ligand>
</feature>
<feature type="binding site" evidence="1">
    <location>
        <position position="29"/>
    </location>
    <ligand>
        <name>Zn(2+)</name>
        <dbReference type="ChEBI" id="CHEBI:29105"/>
    </ligand>
</feature>
<feature type="binding site" evidence="1">
    <location>
        <position position="31"/>
    </location>
    <ligand>
        <name>Zn(2+)</name>
        <dbReference type="ChEBI" id="CHEBI:29105"/>
    </ligand>
</feature>
<feature type="binding site" evidence="1">
    <location>
        <position position="35"/>
    </location>
    <ligand>
        <name>Zn(2+)</name>
        <dbReference type="ChEBI" id="CHEBI:29105"/>
    </ligand>
</feature>
<feature type="modified residue" description="Phosphoserine" evidence="1">
    <location>
        <position position="127"/>
    </location>
</feature>
<feature type="sequence conflict" description="In Ref. 1; CAA39810/CAA39811." evidence="5" ref="1">
    <original>R</original>
    <variation>H</variation>
    <location>
        <position position="62"/>
    </location>
</feature>
<feature type="sequence conflict" description="In Ref. 1; CAA39810/CAA39811." evidence="5" ref="1">
    <original>QSPGPSPPLRRHRHTMHSHQCP</original>
    <variation>RARPQPSSEAPQTHHALPPVS</variation>
    <location>
        <begin position="65"/>
        <end position="86"/>
    </location>
</feature>
<proteinExistence type="evidence at transcript level"/>
<organism>
    <name type="scientific">Bos taurus</name>
    <name type="common">Bovine</name>
    <dbReference type="NCBI Taxonomy" id="9913"/>
    <lineage>
        <taxon>Eukaryota</taxon>
        <taxon>Metazoa</taxon>
        <taxon>Chordata</taxon>
        <taxon>Craniata</taxon>
        <taxon>Vertebrata</taxon>
        <taxon>Euteleostomi</taxon>
        <taxon>Mammalia</taxon>
        <taxon>Eutheria</taxon>
        <taxon>Laurasiatheria</taxon>
        <taxon>Artiodactyla</taxon>
        <taxon>Ruminantia</taxon>
        <taxon>Pecora</taxon>
        <taxon>Bovidae</taxon>
        <taxon>Bovinae</taxon>
        <taxon>Bos</taxon>
    </lineage>
</organism>
<sequence length="132" mass="15241">MDTKTQSLPNTHAQPHSNSRPQSHACHHCSCSQHCQSRSRSRSCRSRSSSRRPRSHRSPTGRQGQSPGPSPPLRRHRHTMHSHQCPSRPVTHSCSHSKNRKNLEGKVIKRKQVKRSKQVYKRKRQSSGRKYN</sequence>
<evidence type="ECO:0000250" key="1">
    <source>
        <dbReference type="UniProtKB" id="P11101"/>
    </source>
</evidence>
<evidence type="ECO:0000250" key="2">
    <source>
        <dbReference type="UniProtKB" id="P11378"/>
    </source>
</evidence>
<evidence type="ECO:0000256" key="3">
    <source>
        <dbReference type="SAM" id="MobiDB-lite"/>
    </source>
</evidence>
<evidence type="ECO:0000269" key="4">
    <source>
    </source>
</evidence>
<evidence type="ECO:0000305" key="5"/>
<reference key="1">
    <citation type="journal article" date="1991" name="Biol. Chem. Hoppe-Seyler">
        <title>Characterization of a gene encoding a basic protein of the spermatid nucleus, TNP2, and its close linkage to the protamine genes in the bull.</title>
        <authorList>
            <person name="Reinhart N."/>
            <person name="Kremling H."/>
            <person name="Luerssen H."/>
            <person name="Adham I.M."/>
            <person name="Engel W."/>
        </authorList>
    </citation>
    <scope>NUCLEOTIDE SEQUENCE [GENOMIC DNA]</scope>
    <scope>TISSUE SPECIFICITY</scope>
    <scope>DEVELOPMENTAL STAGE</scope>
</reference>
<reference key="2">
    <citation type="submission" date="2005-11" db="EMBL/GenBank/DDBJ databases">
        <authorList>
            <consortium name="NIH - Mammalian Gene Collection (MGC) project"/>
        </authorList>
    </citation>
    <scope>NUCLEOTIDE SEQUENCE [LARGE SCALE MRNA]</scope>
    <source>
        <strain>Crossbred X Angus</strain>
        <tissue>Liver</tissue>
    </source>
</reference>
<protein>
    <recommendedName>
        <fullName>Nuclear transition protein 2</fullName>
        <shortName>TP-2</shortName>
        <shortName>TP2</shortName>
    </recommendedName>
</protein>
<accession>P26377</accession>
<accession>Q32L25</accession>
<gene>
    <name type="primary">TNP2</name>
</gene>
<name>STP2_BOVIN</name>